<dbReference type="EC" id="6.3.4.-" evidence="1"/>
<dbReference type="EMBL" id="CP000924">
    <property type="protein sequence ID" value="ABY94951.1"/>
    <property type="molecule type" value="Genomic_DNA"/>
</dbReference>
<dbReference type="RefSeq" id="WP_012269382.1">
    <property type="nucleotide sequence ID" value="NC_010321.1"/>
</dbReference>
<dbReference type="SMR" id="B0K9Y8"/>
<dbReference type="STRING" id="340099.Teth39_1297"/>
<dbReference type="KEGG" id="tpd:Teth39_1297"/>
<dbReference type="eggNOG" id="COG1323">
    <property type="taxonomic scope" value="Bacteria"/>
</dbReference>
<dbReference type="HOGENOM" id="CLU_038915_0_1_9"/>
<dbReference type="Proteomes" id="UP000002156">
    <property type="component" value="Chromosome"/>
</dbReference>
<dbReference type="GO" id="GO:0005737">
    <property type="term" value="C:cytoplasm"/>
    <property type="evidence" value="ECO:0007669"/>
    <property type="project" value="UniProtKB-SubCell"/>
</dbReference>
<dbReference type="GO" id="GO:0005524">
    <property type="term" value="F:ATP binding"/>
    <property type="evidence" value="ECO:0007669"/>
    <property type="project" value="UniProtKB-KW"/>
</dbReference>
<dbReference type="GO" id="GO:0016879">
    <property type="term" value="F:ligase activity, forming carbon-nitrogen bonds"/>
    <property type="evidence" value="ECO:0007669"/>
    <property type="project" value="UniProtKB-UniRule"/>
</dbReference>
<dbReference type="GO" id="GO:0000049">
    <property type="term" value="F:tRNA binding"/>
    <property type="evidence" value="ECO:0007669"/>
    <property type="project" value="UniProtKB-KW"/>
</dbReference>
<dbReference type="GO" id="GO:0006400">
    <property type="term" value="P:tRNA modification"/>
    <property type="evidence" value="ECO:0007669"/>
    <property type="project" value="UniProtKB-UniRule"/>
</dbReference>
<dbReference type="Gene3D" id="3.40.50.620">
    <property type="entry name" value="HUPs"/>
    <property type="match status" value="1"/>
</dbReference>
<dbReference type="HAMAP" id="MF_01539">
    <property type="entry name" value="TmcAL"/>
    <property type="match status" value="1"/>
</dbReference>
<dbReference type="InterPro" id="IPR014729">
    <property type="entry name" value="Rossmann-like_a/b/a_fold"/>
</dbReference>
<dbReference type="InterPro" id="IPR008513">
    <property type="entry name" value="tRNA(Met)_cyd_acetate_ligase"/>
</dbReference>
<dbReference type="NCBIfam" id="NF010191">
    <property type="entry name" value="PRK13670.1"/>
    <property type="match status" value="1"/>
</dbReference>
<dbReference type="PANTHER" id="PTHR37825">
    <property type="entry name" value="TRNA(MET) CYTIDINE ACETATE LIGASE"/>
    <property type="match status" value="1"/>
</dbReference>
<dbReference type="PANTHER" id="PTHR37825:SF1">
    <property type="entry name" value="TRNA(MET) CYTIDINE ACETATE LIGASE"/>
    <property type="match status" value="1"/>
</dbReference>
<dbReference type="Pfam" id="PF05636">
    <property type="entry name" value="HIGH_NTase1"/>
    <property type="match status" value="1"/>
</dbReference>
<dbReference type="SUPFAM" id="SSF52374">
    <property type="entry name" value="Nucleotidylyl transferase"/>
    <property type="match status" value="1"/>
</dbReference>
<feature type="chain" id="PRO_1000146637" description="tRNA(Met) cytidine acetate ligase">
    <location>
        <begin position="1"/>
        <end position="401"/>
    </location>
</feature>
<feature type="binding site" evidence="1">
    <location>
        <begin position="7"/>
        <end position="20"/>
    </location>
    <ligand>
        <name>ATP</name>
        <dbReference type="ChEBI" id="CHEBI:30616"/>
    </ligand>
</feature>
<feature type="binding site" evidence="1">
    <location>
        <position position="102"/>
    </location>
    <ligand>
        <name>ATP</name>
        <dbReference type="ChEBI" id="CHEBI:30616"/>
    </ligand>
</feature>
<feature type="binding site" evidence="1">
    <location>
        <position position="164"/>
    </location>
    <ligand>
        <name>ATP</name>
        <dbReference type="ChEBI" id="CHEBI:30616"/>
    </ligand>
</feature>
<feature type="binding site" evidence="1">
    <location>
        <position position="189"/>
    </location>
    <ligand>
        <name>ATP</name>
        <dbReference type="ChEBI" id="CHEBI:30616"/>
    </ligand>
</feature>
<proteinExistence type="inferred from homology"/>
<protein>
    <recommendedName>
        <fullName evidence="1">tRNA(Met) cytidine acetate ligase</fullName>
        <ecNumber evidence="1">6.3.4.-</ecNumber>
    </recommendedName>
</protein>
<reference key="1">
    <citation type="submission" date="2008-01" db="EMBL/GenBank/DDBJ databases">
        <title>Complete sequence of Thermoanaerobacter pseudethanolicus 39E.</title>
        <authorList>
            <person name="Copeland A."/>
            <person name="Lucas S."/>
            <person name="Lapidus A."/>
            <person name="Barry K."/>
            <person name="Glavina del Rio T."/>
            <person name="Dalin E."/>
            <person name="Tice H."/>
            <person name="Pitluck S."/>
            <person name="Bruce D."/>
            <person name="Goodwin L."/>
            <person name="Saunders E."/>
            <person name="Brettin T."/>
            <person name="Detter J.C."/>
            <person name="Han C."/>
            <person name="Schmutz J."/>
            <person name="Larimer F."/>
            <person name="Land M."/>
            <person name="Hauser L."/>
            <person name="Kyrpides N."/>
            <person name="Lykidis A."/>
            <person name="Hemme C."/>
            <person name="Fields M.W."/>
            <person name="He Z."/>
            <person name="Zhou J."/>
            <person name="Richardson P."/>
        </authorList>
    </citation>
    <scope>NUCLEOTIDE SEQUENCE [LARGE SCALE GENOMIC DNA]</scope>
    <source>
        <strain>ATCC 33223 / DSM 2355 / 39E</strain>
    </source>
</reference>
<sequence length="401" mass="45893">MGILGIIVEYNPFHNGHLYHLQTSKELTKCDYTIAVMSGNFVQRGEPAIVDKWKRTQMALKAGIDLVIELPVVYATSTAENFAYGAVKLLDSLKIVDCFSFGSEKGDLNELTKIAEILLEEPIYYRKALKEYLKSGITFAKARELALQKVINNNEIEKILQTSNNILAIEYLKSLKKIGSSITPFTIKRKGSLYTSLELKGEFASASSIRKHIFEKGLEGLEKYIPDFTKEILQSSFEKKQGPVSLEEFSNILIYLLRNHIPLNHIFDVSEGLENKIYKASYKTNNVEELMKLVKSKRYTESRIRHILIHLLLNIDKQIFKEFDGPNYIRVLGFNEKGKEMLREIKKKSPLPIITKVSQYKEKLSNTKMFEKDLFATDVYTLAYKNSSIAGLDFIHPLIKL</sequence>
<comment type="function">
    <text evidence="1">Catalyzes the formation of N(4)-acetylcytidine (ac(4)C) at the wobble position of elongator tRNA(Met), using acetate and ATP as substrates. First activates an acetate ion to form acetyladenylate (Ac-AMP) and then transfers the acetyl group to tRNA to form ac(4)C34.</text>
</comment>
<comment type="catalytic activity">
    <reaction evidence="1">
        <text>cytidine(34) in elongator tRNA(Met) + acetate + ATP = N(4)-acetylcytidine(34) in elongator tRNA(Met) + AMP + diphosphate</text>
        <dbReference type="Rhea" id="RHEA:58144"/>
        <dbReference type="Rhea" id="RHEA-COMP:10693"/>
        <dbReference type="Rhea" id="RHEA-COMP:10694"/>
        <dbReference type="ChEBI" id="CHEBI:30089"/>
        <dbReference type="ChEBI" id="CHEBI:30616"/>
        <dbReference type="ChEBI" id="CHEBI:33019"/>
        <dbReference type="ChEBI" id="CHEBI:74900"/>
        <dbReference type="ChEBI" id="CHEBI:82748"/>
        <dbReference type="ChEBI" id="CHEBI:456215"/>
    </reaction>
</comment>
<comment type="subcellular location">
    <subcellularLocation>
        <location evidence="1">Cytoplasm</location>
    </subcellularLocation>
</comment>
<comment type="similarity">
    <text evidence="1">Belongs to the TmcAL family.</text>
</comment>
<keyword id="KW-0067">ATP-binding</keyword>
<keyword id="KW-0963">Cytoplasm</keyword>
<keyword id="KW-0436">Ligase</keyword>
<keyword id="KW-0547">Nucleotide-binding</keyword>
<keyword id="KW-1185">Reference proteome</keyword>
<keyword id="KW-0694">RNA-binding</keyword>
<keyword id="KW-0819">tRNA processing</keyword>
<keyword id="KW-0820">tRNA-binding</keyword>
<evidence type="ECO:0000255" key="1">
    <source>
        <dbReference type="HAMAP-Rule" id="MF_01539"/>
    </source>
</evidence>
<organism>
    <name type="scientific">Thermoanaerobacter pseudethanolicus (strain ATCC 33223 / 39E)</name>
    <name type="common">Clostridium thermohydrosulfuricum</name>
    <dbReference type="NCBI Taxonomy" id="340099"/>
    <lineage>
        <taxon>Bacteria</taxon>
        <taxon>Bacillati</taxon>
        <taxon>Bacillota</taxon>
        <taxon>Clostridia</taxon>
        <taxon>Thermoanaerobacterales</taxon>
        <taxon>Thermoanaerobacteraceae</taxon>
        <taxon>Thermoanaerobacter</taxon>
    </lineage>
</organism>
<accession>B0K9Y8</accession>
<gene>
    <name evidence="1" type="primary">tmcAL</name>
    <name type="ordered locus">Teth39_1297</name>
</gene>
<name>TMCAL_THEP3</name>